<protein>
    <recommendedName>
        <fullName evidence="1">DNA-directed RNA polymerase subunit beta''</fullName>
        <ecNumber evidence="1">2.7.7.6</ecNumber>
    </recommendedName>
    <alternativeName>
        <fullName evidence="1">PEP</fullName>
    </alternativeName>
    <alternativeName>
        <fullName evidence="1">Plastid-encoded RNA polymerase subunit beta''</fullName>
        <shortName evidence="1">RNA polymerase subunit beta''</shortName>
    </alternativeName>
</protein>
<organism>
    <name type="scientific">Saccharum hybrid</name>
    <name type="common">Sugarcane</name>
    <dbReference type="NCBI Taxonomy" id="15819"/>
    <lineage>
        <taxon>Eukaryota</taxon>
        <taxon>Viridiplantae</taxon>
        <taxon>Streptophyta</taxon>
        <taxon>Embryophyta</taxon>
        <taxon>Tracheophyta</taxon>
        <taxon>Spermatophyta</taxon>
        <taxon>Magnoliopsida</taxon>
        <taxon>Liliopsida</taxon>
        <taxon>Poales</taxon>
        <taxon>Poaceae</taxon>
        <taxon>PACMAD clade</taxon>
        <taxon>Panicoideae</taxon>
        <taxon>Andropogonodae</taxon>
        <taxon>Andropogoneae</taxon>
        <taxon>Saccharinae</taxon>
        <taxon>Saccharum</taxon>
    </lineage>
</organism>
<dbReference type="EC" id="2.7.7.6" evidence="1"/>
<dbReference type="EMBL" id="AE009947">
    <property type="protein sequence ID" value="AAT44687.1"/>
    <property type="status" value="ALT_SEQ"/>
    <property type="molecule type" value="Genomic_DNA"/>
</dbReference>
<dbReference type="SMR" id="Q6L3A5"/>
<dbReference type="GO" id="GO:0009507">
    <property type="term" value="C:chloroplast"/>
    <property type="evidence" value="ECO:0007669"/>
    <property type="project" value="UniProtKB-SubCell"/>
</dbReference>
<dbReference type="GO" id="GO:0000428">
    <property type="term" value="C:DNA-directed RNA polymerase complex"/>
    <property type="evidence" value="ECO:0007669"/>
    <property type="project" value="UniProtKB-KW"/>
</dbReference>
<dbReference type="GO" id="GO:0005739">
    <property type="term" value="C:mitochondrion"/>
    <property type="evidence" value="ECO:0007669"/>
    <property type="project" value="GOC"/>
</dbReference>
<dbReference type="GO" id="GO:0003677">
    <property type="term" value="F:DNA binding"/>
    <property type="evidence" value="ECO:0007669"/>
    <property type="project" value="UniProtKB-UniRule"/>
</dbReference>
<dbReference type="GO" id="GO:0003899">
    <property type="term" value="F:DNA-directed RNA polymerase activity"/>
    <property type="evidence" value="ECO:0007669"/>
    <property type="project" value="UniProtKB-UniRule"/>
</dbReference>
<dbReference type="GO" id="GO:0008270">
    <property type="term" value="F:zinc ion binding"/>
    <property type="evidence" value="ECO:0007669"/>
    <property type="project" value="UniProtKB-UniRule"/>
</dbReference>
<dbReference type="GO" id="GO:0006351">
    <property type="term" value="P:DNA-templated transcription"/>
    <property type="evidence" value="ECO:0007669"/>
    <property type="project" value="UniProtKB-UniRule"/>
</dbReference>
<dbReference type="CDD" id="cd02655">
    <property type="entry name" value="RNAP_beta'_C"/>
    <property type="match status" value="1"/>
</dbReference>
<dbReference type="FunFam" id="1.10.132.30:FF:000002">
    <property type="entry name" value="DNA-directed RNA polymerase subunit beta"/>
    <property type="match status" value="1"/>
</dbReference>
<dbReference type="Gene3D" id="1.10.132.30">
    <property type="match status" value="1"/>
</dbReference>
<dbReference type="Gene3D" id="1.10.150.390">
    <property type="match status" value="1"/>
</dbReference>
<dbReference type="Gene3D" id="1.10.1790.20">
    <property type="match status" value="1"/>
</dbReference>
<dbReference type="Gene3D" id="1.10.274.100">
    <property type="entry name" value="RNA polymerase Rpb1, domain 3"/>
    <property type="match status" value="1"/>
</dbReference>
<dbReference type="HAMAP" id="MF_01324">
    <property type="entry name" value="RNApol_bact_RpoC2"/>
    <property type="match status" value="1"/>
</dbReference>
<dbReference type="InterPro" id="IPR012756">
    <property type="entry name" value="DNA-dir_RpoC2_beta_pp"/>
</dbReference>
<dbReference type="InterPro" id="IPR050254">
    <property type="entry name" value="RNA_pol_beta''_euk"/>
</dbReference>
<dbReference type="InterPro" id="IPR042102">
    <property type="entry name" value="RNA_pol_Rpb1_3_sf"/>
</dbReference>
<dbReference type="InterPro" id="IPR007083">
    <property type="entry name" value="RNA_pol_Rpb1_4"/>
</dbReference>
<dbReference type="InterPro" id="IPR007081">
    <property type="entry name" value="RNA_pol_Rpb1_5"/>
</dbReference>
<dbReference type="InterPro" id="IPR038120">
    <property type="entry name" value="Rpb1_funnel_sf"/>
</dbReference>
<dbReference type="NCBIfam" id="TIGR02388">
    <property type="entry name" value="rpoC2_cyan"/>
    <property type="match status" value="1"/>
</dbReference>
<dbReference type="PANTHER" id="PTHR34995">
    <property type="entry name" value="DNA-DIRECTED RNA POLYMERASE SUBUNIT BETA"/>
    <property type="match status" value="1"/>
</dbReference>
<dbReference type="PANTHER" id="PTHR34995:SF1">
    <property type="entry name" value="DNA-DIRECTED RNA POLYMERASE SUBUNIT BETA"/>
    <property type="match status" value="1"/>
</dbReference>
<dbReference type="Pfam" id="PF05000">
    <property type="entry name" value="RNA_pol_Rpb1_4"/>
    <property type="match status" value="1"/>
</dbReference>
<dbReference type="Pfam" id="PF04998">
    <property type="entry name" value="RNA_pol_Rpb1_5"/>
    <property type="match status" value="2"/>
</dbReference>
<dbReference type="SUPFAM" id="SSF64484">
    <property type="entry name" value="beta and beta-prime subunits of DNA dependent RNA-polymerase"/>
    <property type="match status" value="1"/>
</dbReference>
<feature type="chain" id="PRO_0000067945" description="DNA-directed RNA polymerase subunit beta''">
    <location>
        <begin position="1"/>
        <end position="1534"/>
    </location>
</feature>
<feature type="region of interest" description="Disordered" evidence="2">
    <location>
        <begin position="644"/>
        <end position="698"/>
    </location>
</feature>
<feature type="region of interest" description="Disordered" evidence="2">
    <location>
        <begin position="719"/>
        <end position="800"/>
    </location>
</feature>
<feature type="compositionally biased region" description="Basic and acidic residues" evidence="2">
    <location>
        <begin position="644"/>
        <end position="668"/>
    </location>
</feature>
<feature type="compositionally biased region" description="Basic and acidic residues" evidence="2">
    <location>
        <begin position="678"/>
        <end position="688"/>
    </location>
</feature>
<feature type="compositionally biased region" description="Acidic residues" evidence="2">
    <location>
        <begin position="744"/>
        <end position="762"/>
    </location>
</feature>
<feature type="compositionally biased region" description="Acidic residues" evidence="2">
    <location>
        <begin position="770"/>
        <end position="789"/>
    </location>
</feature>
<feature type="binding site" evidence="1">
    <location>
        <position position="220"/>
    </location>
    <ligand>
        <name>Zn(2+)</name>
        <dbReference type="ChEBI" id="CHEBI:29105"/>
    </ligand>
</feature>
<feature type="binding site" evidence="1">
    <location>
        <position position="296"/>
    </location>
    <ligand>
        <name>Zn(2+)</name>
        <dbReference type="ChEBI" id="CHEBI:29105"/>
    </ligand>
</feature>
<feature type="binding site" evidence="1">
    <location>
        <position position="303"/>
    </location>
    <ligand>
        <name>Zn(2+)</name>
        <dbReference type="ChEBI" id="CHEBI:29105"/>
    </ligand>
</feature>
<feature type="binding site" evidence="1">
    <location>
        <position position="306"/>
    </location>
    <ligand>
        <name>Zn(2+)</name>
        <dbReference type="ChEBI" id="CHEBI:29105"/>
    </ligand>
</feature>
<geneLocation type="chloroplast"/>
<accession>Q6L3A5</accession>
<comment type="function">
    <text evidence="1">DNA-dependent RNA polymerase catalyzes the transcription of DNA into RNA using the four ribonucleoside triphosphates as substrates.</text>
</comment>
<comment type="catalytic activity">
    <reaction evidence="1">
        <text>RNA(n) + a ribonucleoside 5'-triphosphate = RNA(n+1) + diphosphate</text>
        <dbReference type="Rhea" id="RHEA:21248"/>
        <dbReference type="Rhea" id="RHEA-COMP:14527"/>
        <dbReference type="Rhea" id="RHEA-COMP:17342"/>
        <dbReference type="ChEBI" id="CHEBI:33019"/>
        <dbReference type="ChEBI" id="CHEBI:61557"/>
        <dbReference type="ChEBI" id="CHEBI:140395"/>
        <dbReference type="EC" id="2.7.7.6"/>
    </reaction>
</comment>
<comment type="cofactor">
    <cofactor evidence="1">
        <name>Zn(2+)</name>
        <dbReference type="ChEBI" id="CHEBI:29105"/>
    </cofactor>
    <text evidence="1">Binds 1 Zn(2+) ion per subunit.</text>
</comment>
<comment type="subunit">
    <text evidence="1">In plastids the minimal PEP RNA polymerase catalytic core is composed of four subunits: alpha, beta, beta', and beta''. When a (nuclear-encoded) sigma factor is associated with the core the holoenzyme is formed, which can initiate transcription.</text>
</comment>
<comment type="subcellular location">
    <subcellularLocation>
        <location evidence="1">Plastid</location>
        <location evidence="1">Chloroplast</location>
    </subcellularLocation>
</comment>
<comment type="RNA editing">
    <location>
        <position position="932" evidence="3"/>
    </location>
</comment>
<comment type="similarity">
    <text evidence="1">Belongs to the RNA polymerase beta' chain family. RpoC2 subfamily.</text>
</comment>
<evidence type="ECO:0000255" key="1">
    <source>
        <dbReference type="HAMAP-Rule" id="MF_01324"/>
    </source>
</evidence>
<evidence type="ECO:0000256" key="2">
    <source>
        <dbReference type="SAM" id="MobiDB-lite"/>
    </source>
</evidence>
<evidence type="ECO:0000269" key="3">
    <source>
    </source>
</evidence>
<proteinExistence type="evidence at transcript level"/>
<gene>
    <name evidence="1" type="primary">rpoC2</name>
    <name type="ordered locus">PS108</name>
</gene>
<reference key="1">
    <citation type="journal article" date="2004" name="Curr. Genet.">
        <title>Structural features and transcript-editing analysis of sugarcane (Saccharum officinarum L.) chloroplast genome.</title>
        <authorList>
            <person name="Calsa T. Jr."/>
            <person name="Carraro D.M."/>
            <person name="Benatti M.R."/>
            <person name="Barbosa A.C."/>
            <person name="Kitajima J.P."/>
            <person name="Carrer H."/>
        </authorList>
    </citation>
    <scope>NUCLEOTIDE SEQUENCE [LARGE SCALE GENOMIC DNA]</scope>
    <scope>RNA EDITING</scope>
    <source>
        <strain>cv. SP-80-3280</strain>
    </source>
</reference>
<reference key="2">
    <citation type="unpublished observations" date="2006-02">
        <authorList>
            <person name="Carrer H."/>
        </authorList>
    </citation>
    <scope>CORRECTION OF EDITING SITE</scope>
</reference>
<sequence length="1534" mass="177061">MAERANLVFHNKEIDGTAIKRLISRLIDHFGMGYTSHILDQIKTLGFHQATTTSISLGIEDLLTIPSKGWLVQDAEQQSFLLEKHYYYGAVHAVEKLRQSVEIWYATSEYLKQEMNSNFRITDPSNPVYLMSFSGARGNASQVHQLVGMRGLMADPQGQMIDLPIQSNLREGLSLTEYIISCYGARKGVVDTAVRTADAGYLTRRLVEVVQHIIVRRRDCGTIQGISVSPQNGMTEKLFVQTLIGRVLADDIYIGSRCIASRNQDIGIGLVNRFITAFRAQPFRAQPIYIRTPFTCRSTSWICQLCYGRSPTHGDLVELGEAVGIIAGQSIGEPGTQLTLRTFHTGGVFTGGTADLIRSPSNGKIQFNEDLVHPTRTRHGQPAFLCYIDLHVTIQSQDILHSVNIPLKSLILVQNDQYVESEQVIAEIRAGMSTLHFKEKVQKHIYSESDGEMHWSTDVYHAPEYQYGNLRRLPKTSHLWILSVSMCRSSIASFSLHKDQDQMNTYSFSVDGRYIFDFSMANDQVSHRLLDTFGKKDREILDYLTPDRIVSNGHWNCFYPSILQDNSDLLAKKRRNRFVVPLQYHQEQEKERISCLGISMEIPFMGVLRRNTIFAYFDDPRYRKDKRGSGIVKFRYRTLEEEYRTQEEEYRTREEEYRTREEEYRTREEDSEDEYESPENKYRTREGEGEYEILEDEYRTLEDEYETLEDEYGILEDEYRTLEKDSEEEYGSLENKYRTREGEGEYEILEEDSEEEYGSSEDGSEKEYGTLEEDSEEDSEEDSEDEYGSPEENSILKKEGFIEHRGTKEFSLKYQKEVDRFFFILQELHILPRSSSLKVLDNSIIGVDTQLTKNTRSRLGGLVRVKRKKSHTELKIFSGDIHFPEEADKILGGSLIPPEREKKDSKESKKRKNWVYVQRKKILKSKEKYFVLVRPAVAYEMDEGRNLATLFPQDLLQEEDNLQLRLVNFISHENSKLTQRIYHTNSQFVRTCLVVNWEQEEKEGARASLVEVRTNDLIRDFLRIELVKSTISYTRRRYDRTSVGLIPNNRLDRNNTNSFYSKAKIQSLSQHQEVIGTLLNRNKEYPSLMILLASNCSRIGLFKNSKYPNAVKESNPRIPIRDIFGLLGVIVPSISNFSSSYYLLTHNQILLKKYLFLDNLKQTFQVLQGLKYSLIDENKRISNFDSNIMLEPFHLNWHFLHHDSWEETLAIIHLGQFICENLCLFKSHIKKSGQIFIVNMDSFVLRAAKPYLATIGATVHGHYGKILYKGDRLVTFIYEKSRSSDITQGLPKVEQIFEARSIDSLSPNLERRIEDWNERIPRILGVPWGFLIGAELTIAQSRISLVNKIQKVYRSQGVQIHNRHIEIIIRQVTSKVRVSEDGMSNVFLPGELIGLLRAERAGRALDESIYYRAILLGITRASLNTQSFISEASFQETARVLAKAALRGRIDWLKGLKENVVLGGIIPVGTGFQKFVHRSPQDKNLYFEIQKKNLFASEMRDILFLHTELVSSDSDVTNNFYETSETPFTPIYTI</sequence>
<keyword id="KW-0150">Chloroplast</keyword>
<keyword id="KW-0240">DNA-directed RNA polymerase</keyword>
<keyword id="KW-0479">Metal-binding</keyword>
<keyword id="KW-0548">Nucleotidyltransferase</keyword>
<keyword id="KW-0934">Plastid</keyword>
<keyword id="KW-0691">RNA editing</keyword>
<keyword id="KW-0804">Transcription</keyword>
<keyword id="KW-0808">Transferase</keyword>
<keyword id="KW-0862">Zinc</keyword>
<name>RPOC2_SACHY</name>